<name>CCMK3_SYNE7</name>
<evidence type="ECO:0000255" key="1">
    <source>
        <dbReference type="HAMAP-Rule" id="MF_00854"/>
    </source>
</evidence>
<evidence type="ECO:0000269" key="2">
    <source>
    </source>
</evidence>
<evidence type="ECO:0000269" key="3">
    <source>
    </source>
</evidence>
<evidence type="ECO:0000269" key="4">
    <source>
    </source>
</evidence>
<evidence type="ECO:0000269" key="5">
    <source>
    </source>
</evidence>
<evidence type="ECO:0000269" key="6">
    <source>
    </source>
</evidence>
<evidence type="ECO:0000303" key="7">
    <source>
    </source>
</evidence>
<evidence type="ECO:0000305" key="8">
    <source>
    </source>
</evidence>
<evidence type="ECO:0000305" key="9">
    <source>
    </source>
</evidence>
<evidence type="ECO:0000305" key="10">
    <source>
    </source>
</evidence>
<dbReference type="EMBL" id="CP000100">
    <property type="protein sequence ID" value="ABB56316.1"/>
    <property type="molecule type" value="Genomic_DNA"/>
</dbReference>
<dbReference type="RefSeq" id="WP_011243540.1">
    <property type="nucleotide sequence ID" value="NZ_JACJTX010000002.1"/>
</dbReference>
<dbReference type="SMR" id="Q31RK3"/>
<dbReference type="STRING" id="1140.Synpcc7942_0284"/>
<dbReference type="TCDB" id="1.S.1.1.8">
    <property type="family name" value="the bacterial microcompartment shell/pore-forming protein-1 (bmc-sp1) family"/>
</dbReference>
<dbReference type="PaxDb" id="1140-Synpcc7942_0284"/>
<dbReference type="KEGG" id="syf:Synpcc7942_0284"/>
<dbReference type="eggNOG" id="COG4577">
    <property type="taxonomic scope" value="Bacteria"/>
</dbReference>
<dbReference type="HOGENOM" id="CLU_064903_5_0_3"/>
<dbReference type="OrthoDB" id="7057533at2"/>
<dbReference type="BioCyc" id="SYNEL:SYNPCC7942_0284-MONOMER"/>
<dbReference type="Proteomes" id="UP000889800">
    <property type="component" value="Chromosome"/>
</dbReference>
<dbReference type="GO" id="GO:0031470">
    <property type="term" value="C:carboxysome"/>
    <property type="evidence" value="ECO:0000315"/>
    <property type="project" value="UniProtKB"/>
</dbReference>
<dbReference type="GO" id="GO:0043886">
    <property type="term" value="F:structural constituent of carboxysome shell"/>
    <property type="evidence" value="ECO:0000353"/>
    <property type="project" value="UniProtKB"/>
</dbReference>
<dbReference type="GO" id="GO:0015977">
    <property type="term" value="P:carbon fixation"/>
    <property type="evidence" value="ECO:0007669"/>
    <property type="project" value="UniProtKB-UniRule"/>
</dbReference>
<dbReference type="GO" id="GO:0015979">
    <property type="term" value="P:photosynthesis"/>
    <property type="evidence" value="ECO:0007669"/>
    <property type="project" value="UniProtKB-KW"/>
</dbReference>
<dbReference type="CDD" id="cd07057">
    <property type="entry name" value="BMC_CcmK"/>
    <property type="match status" value="1"/>
</dbReference>
<dbReference type="Gene3D" id="3.30.70.1710">
    <property type="match status" value="1"/>
</dbReference>
<dbReference type="HAMAP" id="MF_00854">
    <property type="entry name" value="CcmK"/>
    <property type="match status" value="1"/>
</dbReference>
<dbReference type="InterPro" id="IPR000249">
    <property type="entry name" value="BMC_dom"/>
</dbReference>
<dbReference type="InterPro" id="IPR050575">
    <property type="entry name" value="BMC_shell"/>
</dbReference>
<dbReference type="InterPro" id="IPR046380">
    <property type="entry name" value="CcmK"/>
</dbReference>
<dbReference type="InterPro" id="IPR037233">
    <property type="entry name" value="CcmK-like_sf"/>
</dbReference>
<dbReference type="InterPro" id="IPR044872">
    <property type="entry name" value="CcmK/CsoS1_BMC"/>
</dbReference>
<dbReference type="PANTHER" id="PTHR33941:SF13">
    <property type="entry name" value="CARBOXYSOME SHELL PROTEIN CCMK4"/>
    <property type="match status" value="1"/>
</dbReference>
<dbReference type="PANTHER" id="PTHR33941">
    <property type="entry name" value="PROPANEDIOL UTILIZATION PROTEIN PDUA"/>
    <property type="match status" value="1"/>
</dbReference>
<dbReference type="Pfam" id="PF00936">
    <property type="entry name" value="BMC"/>
    <property type="match status" value="1"/>
</dbReference>
<dbReference type="SMART" id="SM00877">
    <property type="entry name" value="BMC"/>
    <property type="match status" value="1"/>
</dbReference>
<dbReference type="SUPFAM" id="SSF143414">
    <property type="entry name" value="CcmK-like"/>
    <property type="match status" value="1"/>
</dbReference>
<dbReference type="PROSITE" id="PS51930">
    <property type="entry name" value="BMC_2"/>
    <property type="match status" value="1"/>
</dbReference>
<protein>
    <recommendedName>
        <fullName evidence="7">Carboxysome shell protein CcmK3</fullName>
    </recommendedName>
    <alternativeName>
        <fullName>Carbon dioxide-concentrating mechanism protein CcmK3</fullName>
    </alternativeName>
</protein>
<reference key="1">
    <citation type="submission" date="2005-08" db="EMBL/GenBank/DDBJ databases">
        <title>Complete sequence of chromosome 1 of Synechococcus elongatus PCC 7942.</title>
        <authorList>
            <consortium name="US DOE Joint Genome Institute"/>
            <person name="Copeland A."/>
            <person name="Lucas S."/>
            <person name="Lapidus A."/>
            <person name="Barry K."/>
            <person name="Detter J.C."/>
            <person name="Glavina T."/>
            <person name="Hammon N."/>
            <person name="Israni S."/>
            <person name="Pitluck S."/>
            <person name="Schmutz J."/>
            <person name="Larimer F."/>
            <person name="Land M."/>
            <person name="Kyrpides N."/>
            <person name="Lykidis A."/>
            <person name="Golden S."/>
            <person name="Richardson P."/>
        </authorList>
    </citation>
    <scope>NUCLEOTIDE SEQUENCE [LARGE SCALE GENOMIC DNA]</scope>
    <source>
        <strain>ATCC 33912 / PCC 7942 / FACHB-805</strain>
    </source>
</reference>
<reference key="2">
    <citation type="journal article" date="2012" name="PLoS ONE">
        <title>Structural determinants of the outer shell of beta-carboxysomes in Synechococcus elongatus PCC 7942: roles for CcmK2, K3-K4, CcmO, and CcmL.</title>
        <authorList>
            <person name="Rae B.D."/>
            <person name="Long B.M."/>
            <person name="Badger M.R."/>
            <person name="Price G.D."/>
        </authorList>
    </citation>
    <scope>FUNCTION</scope>
    <scope>DISRUPTION PHENOTYPE</scope>
    <source>
        <strain>ATCC 33912 / PCC 7942 / FACHB-805</strain>
    </source>
</reference>
<reference key="3">
    <citation type="journal article" date="2015" name="ACS Synth. Biol.">
        <title>Engineering bacterial microcompartment shells: chimeric shell proteins and chimeric carboxysome shells.</title>
        <authorList>
            <person name="Cai F."/>
            <person name="Sutter M."/>
            <person name="Bernstein S.L."/>
            <person name="Kinney J.N."/>
            <person name="Kerfeld C.A."/>
        </authorList>
    </citation>
    <scope>SUBUNIT</scope>
    <scope>SUBCELLULAR LOCATION</scope>
    <source>
        <strain>ATCC 33912 / PCC 7942 / FACHB-805</strain>
    </source>
</reference>
<reference key="4">
    <citation type="journal article" date="2018" name="Front. Plant Sci.">
        <title>Engineering and Modulating Functional Cyanobacterial CO2-Fixing Organelles.</title>
        <authorList>
            <person name="Fang Y."/>
            <person name="Huang F."/>
            <person name="Faulkner M."/>
            <person name="Jiang Q."/>
            <person name="Dykes G.F."/>
            <person name="Yang M."/>
            <person name="Liu L.N."/>
        </authorList>
    </citation>
    <scope>BIOTECHNOLOGY</scope>
    <source>
        <strain>ATCC 33912 / PCC 7942 / FACHB-805</strain>
    </source>
</reference>
<reference key="5">
    <citation type="journal article" date="2019" name="Plant Physiol.">
        <title>Heterohexamers Formed by CcmK3 and CcmK4 Increase the Complexity of Beta Carboxysome Shells.</title>
        <authorList>
            <person name="Sommer M."/>
            <person name="Sutter M."/>
            <person name="Gupta S."/>
            <person name="Kirst H."/>
            <person name="Turmo A."/>
            <person name="Lechno-Yossef S."/>
            <person name="Burton R.L."/>
            <person name="Saechao C."/>
            <person name="Sloan N.B."/>
            <person name="Cheng X."/>
            <person name="Chan L.G."/>
            <person name="Petzold C.J."/>
            <person name="Fuentes-Cabrera M."/>
            <person name="Ralston C.Y."/>
            <person name="Kerfeld C.A."/>
        </authorList>
    </citation>
    <scope>FUNCTION</scope>
    <scope>SUBCELLULAR LOCATION</scope>
    <scope>DISRUPTION PHENOTYPE</scope>
    <source>
        <strain>ATCC 33912 / PCC 7942 / FACHB-805</strain>
    </source>
</reference>
<reference key="6">
    <citation type="journal article" date="2019" name="PLoS ONE">
        <title>Occurrence and stability of hetero-hexamer associations formed by beta-carboxysome CcmK shell components.</title>
        <authorList>
            <person name="Garcia-Alles L.F."/>
            <person name="Root K."/>
            <person name="Maveyraud L."/>
            <person name="Aubry N."/>
            <person name="Lesniewska E."/>
            <person name="Mourey L."/>
            <person name="Zenobi R."/>
            <person name="Truan G."/>
        </authorList>
    </citation>
    <scope>SUBUNIT</scope>
    <source>
        <strain>ATCC 33912 / PCC 7942 / FACHB-805</strain>
    </source>
</reference>
<reference key="7">
    <citation type="journal article" date="2019" name="Plant Cell">
        <title>Single-Organelle Quantification Reveals Stoichiometric and Structural Variability of Carboxysomes Dependent on the Environment.</title>
        <authorList>
            <person name="Sun Y."/>
            <person name="Wollman A.J.M."/>
            <person name="Huang F."/>
            <person name="Leake M.C."/>
            <person name="Liu L.N."/>
        </authorList>
    </citation>
    <scope>SUBCELLULAR LOCATION</scope>
    <scope>INDUCTION</scope>
    <source>
        <strain>ATCC 33912 / PCC 7942 / FACHB-805</strain>
    </source>
</reference>
<feature type="chain" id="PRO_0000451235" description="Carboxysome shell protein CcmK3">
    <location>
        <begin position="1"/>
        <end position="102"/>
    </location>
</feature>
<feature type="domain" description="BMC" evidence="1">
    <location>
        <begin position="4"/>
        <end position="90"/>
    </location>
</feature>
<comment type="function">
    <text evidence="2 3 9">A non-essential, minor shell protein of the carboxysome, a polyhedral inclusion where RuBisCO (ribulose bisphosphate carboxylase, rbcL-rbcS) is sequestered. Hexamers form sheets that form the facets of the polyhedral carboxysome. In PCC 7942 there are several CcmK paralogs with presumably functional differences (PubMed:22928045, PubMed:25117559). This subunit probably only makes heterohexamers with CcmK4. The CcmK3-CcmK4 heterohexmers have been suggested to cap other hexamers, perhaps to alter metabolite flux (Probable).</text>
</comment>
<comment type="subunit">
    <text evidence="5 9 10">Interacts stably with CcmK4, probably forms heterohexamers with a 1:2 CcmK3:CcmK4 stoichiometry (Probable) (PubMed:30389783). Bulky residues in the pore region probably preclude the formation of homohexamers by this subunit (Probable).</text>
</comment>
<comment type="subcellular location">
    <subcellularLocation>
        <location evidence="1 5 6 8">Carboxysome</location>
    </subcellularLocation>
    <text evidence="3">This cyanobacterium makes beta-type carboxysomes.</text>
</comment>
<comment type="induction">
    <text evidence="6">Carboxysome size and components vary with growth conditions. When grown in ambient air at medium light (50 uE meter(-2) second(-1)) there are 15 units of this protein per carboxysome, the numbers are stable under low light and high light, and increase under high CO(2) (at protein level). The CcmK3:CcmK4 ratio of 1:3.8 is stable over all growth conditions.</text>
</comment>
<comment type="disruption phenotype">
    <text evidence="2 5">Single deletion has a wild-type phenotype, a double ccmK3-ccmK4 deletion has slightly larger, aggregated instead of spatially separated carboxysomes, and has a photosynthetic affinity for inorganic carbon between wild-type and carboxysome-less strains (PubMed:22928045). In another study single mutant is wild-type, double ccmK3-ccmK4 mutant has impaired growth rate; ccmK3 does not complement the double deletion, while ccmK4 does (PubMed:30389783).</text>
</comment>
<comment type="biotechnology">
    <text evidence="4">Heterologous expression of 12 carboxysomal genes in E.coli (ccaA, ccmK2, ccmK3, ccmK4, ccmL, ccmM, ccmN, ccmO, ccmP, rbcL, rbcS, rbcX) leads to the formation of bodies that resemble carboxysomes, have densely packed paracrystalline arrays and RuBisCO activity. These structures open the door to generating carboxysomes in plant cells to increase their photosynthesis and productivity, as well as tailoring bacterial microcompartments to specific metabolic needs and molecule delivery. The absence of ccaA, ccmK3, ccmK4, ccmP and rbcX leads to less active RuBisCO.</text>
</comment>
<comment type="similarity">
    <text evidence="1">Belongs to the bacterial microcompartments protein family. CcmK subfamily.</text>
</comment>
<keyword id="KW-1283">Bacterial microcompartment</keyword>
<keyword id="KW-0120">Carbon dioxide fixation</keyword>
<keyword id="KW-1282">Carboxysome</keyword>
<keyword id="KW-0602">Photosynthesis</keyword>
<keyword id="KW-1185">Reference proteome</keyword>
<accession>Q31RK3</accession>
<sequence length="102" mass="10794">MPIAVGTIQTLGFPPIIAAADAMVKAARVTITQYGLAESAQFFVSVRGPVSEVETAVEAGLKAVAETEGAELINYIVIPNPQENVETVMPIDFTAESEPFRS</sequence>
<proteinExistence type="evidence at protein level"/>
<organism>
    <name type="scientific">Synechococcus elongatus (strain ATCC 33912 / PCC 7942 / FACHB-805)</name>
    <name type="common">Anacystis nidulans R2</name>
    <dbReference type="NCBI Taxonomy" id="1140"/>
    <lineage>
        <taxon>Bacteria</taxon>
        <taxon>Bacillati</taxon>
        <taxon>Cyanobacteriota</taxon>
        <taxon>Cyanophyceae</taxon>
        <taxon>Synechococcales</taxon>
        <taxon>Synechococcaceae</taxon>
        <taxon>Synechococcus</taxon>
    </lineage>
</organism>
<gene>
    <name evidence="7" type="primary">ccmK3</name>
    <name type="ordered locus">Synpcc7942_0284</name>
</gene>